<keyword id="KW-0472">Membrane</keyword>
<keyword id="KW-1185">Reference proteome</keyword>
<keyword id="KW-0812">Transmembrane</keyword>
<keyword id="KW-1133">Transmembrane helix</keyword>
<name>MTC7_YEAST</name>
<comment type="function">
    <text evidence="3">May be involved in telomere capping.</text>
</comment>
<comment type="subcellular location">
    <subcellularLocation>
        <location evidence="4">Membrane</location>
        <topology evidence="4">Multi-pass membrane protein</topology>
    </subcellularLocation>
</comment>
<sequence length="139" mass="16094">MKKEKKTPTPLPSHHVLFAEPGFFLCNFFFVLLKHTQINPFFYFLFILLFIIYIAIIYFVFIRISHFSFSLCRQCNSLGRMIFMCAYLPAASSRSVANPALPPQKKKKKKKKGTLRTGEVEEQAKGNISFDLCGKQNFQ</sequence>
<gene>
    <name type="primary">MTC7</name>
    <name type="ordered locus">YEL033W</name>
    <name type="ORF">SYGP-ORF22</name>
</gene>
<proteinExistence type="predicted"/>
<evidence type="ECO:0000255" key="1"/>
<evidence type="ECO:0000256" key="2">
    <source>
        <dbReference type="SAM" id="MobiDB-lite"/>
    </source>
</evidence>
<evidence type="ECO:0000269" key="3">
    <source>
    </source>
</evidence>
<evidence type="ECO:0000305" key="4"/>
<dbReference type="EMBL" id="U18779">
    <property type="protein sequence ID" value="AAB65009.1"/>
    <property type="molecule type" value="Genomic_DNA"/>
</dbReference>
<dbReference type="EMBL" id="BK006939">
    <property type="protein sequence ID" value="DAA07620.1"/>
    <property type="molecule type" value="Genomic_DNA"/>
</dbReference>
<dbReference type="PIR" id="S30850">
    <property type="entry name" value="S30850"/>
</dbReference>
<dbReference type="RefSeq" id="NP_010881.1">
    <property type="nucleotide sequence ID" value="NM_001178848.1"/>
</dbReference>
<dbReference type="SMR" id="P32633"/>
<dbReference type="BioGRID" id="300943">
    <property type="interactions" value="9"/>
</dbReference>
<dbReference type="FunCoup" id="P32633">
    <property type="interactions" value="30"/>
</dbReference>
<dbReference type="IntAct" id="P32633">
    <property type="interactions" value="1"/>
</dbReference>
<dbReference type="STRING" id="4932.YEL033W"/>
<dbReference type="PaxDb" id="4932-YEL033W"/>
<dbReference type="EnsemblFungi" id="YEL033W_mRNA">
    <property type="protein sequence ID" value="YEL033W"/>
    <property type="gene ID" value="YEL033W"/>
</dbReference>
<dbReference type="GeneID" id="856678"/>
<dbReference type="KEGG" id="sce:YEL033W"/>
<dbReference type="AGR" id="SGD:S000000759"/>
<dbReference type="SGD" id="S000000759">
    <property type="gene designation" value="MTC7"/>
</dbReference>
<dbReference type="VEuPathDB" id="FungiDB:YEL033W"/>
<dbReference type="HOGENOM" id="CLU_1897411_0_0_1"/>
<dbReference type="InParanoid" id="P32633"/>
<dbReference type="OrthoDB" id="10405987at2759"/>
<dbReference type="BioCyc" id="YEAST:G3O-30155-MONOMER"/>
<dbReference type="ChiTaRS" id="MTC7">
    <property type="organism name" value="yeast"/>
</dbReference>
<dbReference type="PRO" id="PR:P32633"/>
<dbReference type="Proteomes" id="UP000002311">
    <property type="component" value="Chromosome V"/>
</dbReference>
<dbReference type="RNAct" id="P32633">
    <property type="molecule type" value="protein"/>
</dbReference>
<dbReference type="GO" id="GO:0016020">
    <property type="term" value="C:membrane"/>
    <property type="evidence" value="ECO:0007669"/>
    <property type="project" value="UniProtKB-SubCell"/>
</dbReference>
<organism>
    <name type="scientific">Saccharomyces cerevisiae (strain ATCC 204508 / S288c)</name>
    <name type="common">Baker's yeast</name>
    <dbReference type="NCBI Taxonomy" id="559292"/>
    <lineage>
        <taxon>Eukaryota</taxon>
        <taxon>Fungi</taxon>
        <taxon>Dikarya</taxon>
        <taxon>Ascomycota</taxon>
        <taxon>Saccharomycotina</taxon>
        <taxon>Saccharomycetes</taxon>
        <taxon>Saccharomycetales</taxon>
        <taxon>Saccharomycetaceae</taxon>
        <taxon>Saccharomyces</taxon>
    </lineage>
</organism>
<feature type="chain" id="PRO_0000202608" description="Maintenance of telomere capping protein 7">
    <location>
        <begin position="1"/>
        <end position="139"/>
    </location>
</feature>
<feature type="transmembrane region" description="Helical" evidence="1">
    <location>
        <begin position="13"/>
        <end position="33"/>
    </location>
</feature>
<feature type="transmembrane region" description="Helical" evidence="1">
    <location>
        <begin position="42"/>
        <end position="62"/>
    </location>
</feature>
<feature type="region of interest" description="Disordered" evidence="2">
    <location>
        <begin position="94"/>
        <end position="121"/>
    </location>
</feature>
<feature type="compositionally biased region" description="Basic residues" evidence="2">
    <location>
        <begin position="104"/>
        <end position="114"/>
    </location>
</feature>
<accession>P32633</accession>
<accession>D3DLL6</accession>
<reference key="1">
    <citation type="journal article" date="1997" name="Nature">
        <title>The nucleotide sequence of Saccharomyces cerevisiae chromosome V.</title>
        <authorList>
            <person name="Dietrich F.S."/>
            <person name="Mulligan J.T."/>
            <person name="Hennessy K.M."/>
            <person name="Yelton M.A."/>
            <person name="Allen E."/>
            <person name="Araujo R."/>
            <person name="Aviles E."/>
            <person name="Berno A."/>
            <person name="Brennan T."/>
            <person name="Carpenter J."/>
            <person name="Chen E."/>
            <person name="Cherry J.M."/>
            <person name="Chung E."/>
            <person name="Duncan M."/>
            <person name="Guzman E."/>
            <person name="Hartzell G."/>
            <person name="Hunicke-Smith S."/>
            <person name="Hyman R.W."/>
            <person name="Kayser A."/>
            <person name="Komp C."/>
            <person name="Lashkari D."/>
            <person name="Lew H."/>
            <person name="Lin D."/>
            <person name="Mosedale D."/>
            <person name="Nakahara K."/>
            <person name="Namath A."/>
            <person name="Norgren R."/>
            <person name="Oefner P."/>
            <person name="Oh C."/>
            <person name="Petel F.X."/>
            <person name="Roberts D."/>
            <person name="Sehl P."/>
            <person name="Schramm S."/>
            <person name="Shogren T."/>
            <person name="Smith V."/>
            <person name="Taylor P."/>
            <person name="Wei Y."/>
            <person name="Botstein D."/>
            <person name="Davis R.W."/>
        </authorList>
    </citation>
    <scope>NUCLEOTIDE SEQUENCE [LARGE SCALE GENOMIC DNA]</scope>
    <source>
        <strain>ATCC 204508 / S288c</strain>
    </source>
</reference>
<reference key="2">
    <citation type="journal article" date="2014" name="G3 (Bethesda)">
        <title>The reference genome sequence of Saccharomyces cerevisiae: Then and now.</title>
        <authorList>
            <person name="Engel S.R."/>
            <person name="Dietrich F.S."/>
            <person name="Fisk D.G."/>
            <person name="Binkley G."/>
            <person name="Balakrishnan R."/>
            <person name="Costanzo M.C."/>
            <person name="Dwight S.S."/>
            <person name="Hitz B.C."/>
            <person name="Karra K."/>
            <person name="Nash R.S."/>
            <person name="Weng S."/>
            <person name="Wong E.D."/>
            <person name="Lloyd P."/>
            <person name="Skrzypek M.S."/>
            <person name="Miyasato S.R."/>
            <person name="Simison M."/>
            <person name="Cherry J.M."/>
        </authorList>
    </citation>
    <scope>GENOME REANNOTATION</scope>
    <source>
        <strain>ATCC 204508 / S288c</strain>
    </source>
</reference>
<reference key="3">
    <citation type="journal article" date="2008" name="Genetics">
        <title>A genomewide suppressor and enhancer analysis of cdc13-1 reveals varied cellular processes influencing telomere capping in Saccharomyces cerevisiae.</title>
        <authorList>
            <person name="Addinall S.G."/>
            <person name="Downey M."/>
            <person name="Yu M."/>
            <person name="Zubko M.K."/>
            <person name="Dewar J."/>
            <person name="Leake A."/>
            <person name="Hallinan J."/>
            <person name="Shaw O."/>
            <person name="James K."/>
            <person name="Wilkinson D.J."/>
            <person name="Wipat A."/>
            <person name="Durocher D."/>
            <person name="Lydall D."/>
        </authorList>
    </citation>
    <scope>FUNCTION</scope>
</reference>
<protein>
    <recommendedName>
        <fullName>Maintenance of telomere capping protein 7</fullName>
    </recommendedName>
</protein>